<feature type="chain" id="PRO_0000229069" description="1-(5-phosphoribosyl)-5-[(5-phosphoribosylamino)methylideneamino] imidazole-4-carboxamide isomerase">
    <location>
        <begin position="1"/>
        <end position="255"/>
    </location>
</feature>
<feature type="active site" description="Proton acceptor" evidence="1">
    <location>
        <position position="8"/>
    </location>
</feature>
<feature type="active site" description="Proton donor" evidence="1">
    <location>
        <position position="129"/>
    </location>
</feature>
<proteinExistence type="inferred from homology"/>
<evidence type="ECO:0000255" key="1">
    <source>
        <dbReference type="HAMAP-Rule" id="MF_01014"/>
    </source>
</evidence>
<protein>
    <recommendedName>
        <fullName evidence="1">1-(5-phosphoribosyl)-5-[(5-phosphoribosylamino)methylideneamino] imidazole-4-carboxamide isomerase</fullName>
        <ecNumber evidence="1">5.3.1.16</ecNumber>
    </recommendedName>
    <alternativeName>
        <fullName evidence="1">Phosphoribosylformimino-5-aminoimidazole carboxamide ribotide isomerase</fullName>
    </alternativeName>
</protein>
<keyword id="KW-0028">Amino-acid biosynthesis</keyword>
<keyword id="KW-0963">Cytoplasm</keyword>
<keyword id="KW-0368">Histidine biosynthesis</keyword>
<keyword id="KW-0413">Isomerase</keyword>
<dbReference type="EC" id="5.3.1.16" evidence="1"/>
<dbReference type="EMBL" id="CP000111">
    <property type="protein sequence ID" value="ABB49864.1"/>
    <property type="molecule type" value="Genomic_DNA"/>
</dbReference>
<dbReference type="RefSeq" id="WP_011376359.1">
    <property type="nucleotide sequence ID" value="NC_007577.1"/>
</dbReference>
<dbReference type="SMR" id="Q31B81"/>
<dbReference type="STRING" id="74546.PMT9312_0804"/>
<dbReference type="KEGG" id="pmi:PMT9312_0804"/>
<dbReference type="eggNOG" id="COG0106">
    <property type="taxonomic scope" value="Bacteria"/>
</dbReference>
<dbReference type="HOGENOM" id="CLU_048577_1_1_3"/>
<dbReference type="OrthoDB" id="9807749at2"/>
<dbReference type="UniPathway" id="UPA00031">
    <property type="reaction ID" value="UER00009"/>
</dbReference>
<dbReference type="Proteomes" id="UP000002715">
    <property type="component" value="Chromosome"/>
</dbReference>
<dbReference type="GO" id="GO:0005737">
    <property type="term" value="C:cytoplasm"/>
    <property type="evidence" value="ECO:0007669"/>
    <property type="project" value="UniProtKB-SubCell"/>
</dbReference>
<dbReference type="GO" id="GO:0003949">
    <property type="term" value="F:1-(5-phosphoribosyl)-5-[(5-phosphoribosylamino)methylideneamino]imidazole-4-carboxamide isomerase activity"/>
    <property type="evidence" value="ECO:0007669"/>
    <property type="project" value="UniProtKB-UniRule"/>
</dbReference>
<dbReference type="GO" id="GO:0000105">
    <property type="term" value="P:L-histidine biosynthetic process"/>
    <property type="evidence" value="ECO:0007669"/>
    <property type="project" value="UniProtKB-UniRule"/>
</dbReference>
<dbReference type="GO" id="GO:0000162">
    <property type="term" value="P:L-tryptophan biosynthetic process"/>
    <property type="evidence" value="ECO:0007669"/>
    <property type="project" value="TreeGrafter"/>
</dbReference>
<dbReference type="CDD" id="cd04732">
    <property type="entry name" value="HisA"/>
    <property type="match status" value="1"/>
</dbReference>
<dbReference type="FunFam" id="3.20.20.70:FF:000009">
    <property type="entry name" value="1-(5-phosphoribosyl)-5-[(5-phosphoribosylamino)methylideneamino] imidazole-4-carboxamide isomerase"/>
    <property type="match status" value="1"/>
</dbReference>
<dbReference type="Gene3D" id="3.20.20.70">
    <property type="entry name" value="Aldolase class I"/>
    <property type="match status" value="1"/>
</dbReference>
<dbReference type="HAMAP" id="MF_01014">
    <property type="entry name" value="HisA"/>
    <property type="match status" value="1"/>
</dbReference>
<dbReference type="InterPro" id="IPR013785">
    <property type="entry name" value="Aldolase_TIM"/>
</dbReference>
<dbReference type="InterPro" id="IPR006062">
    <property type="entry name" value="His_biosynth"/>
</dbReference>
<dbReference type="InterPro" id="IPR006063">
    <property type="entry name" value="HisA_bact_arch"/>
</dbReference>
<dbReference type="InterPro" id="IPR044524">
    <property type="entry name" value="Isoase_HisA-like"/>
</dbReference>
<dbReference type="InterPro" id="IPR023016">
    <property type="entry name" value="Isoase_HisA-like_bact"/>
</dbReference>
<dbReference type="InterPro" id="IPR011060">
    <property type="entry name" value="RibuloseP-bd_barrel"/>
</dbReference>
<dbReference type="NCBIfam" id="TIGR00007">
    <property type="entry name" value="1-(5-phosphoribosyl)-5-[(5-phosphoribosylamino)methylideneamino]imidazole-4-carboxamide isomerase"/>
    <property type="match status" value="1"/>
</dbReference>
<dbReference type="PANTHER" id="PTHR43090">
    <property type="entry name" value="1-(5-PHOSPHORIBOSYL)-5-[(5-PHOSPHORIBOSYLAMINO)METHYLIDENEAMINO] IMIDAZOLE-4-CARBOXAMIDE ISOMERASE"/>
    <property type="match status" value="1"/>
</dbReference>
<dbReference type="PANTHER" id="PTHR43090:SF2">
    <property type="entry name" value="1-(5-PHOSPHORIBOSYL)-5-[(5-PHOSPHORIBOSYLAMINO)METHYLIDENEAMINO] IMIDAZOLE-4-CARBOXAMIDE ISOMERASE"/>
    <property type="match status" value="1"/>
</dbReference>
<dbReference type="Pfam" id="PF00977">
    <property type="entry name" value="His_biosynth"/>
    <property type="match status" value="1"/>
</dbReference>
<dbReference type="SUPFAM" id="SSF51366">
    <property type="entry name" value="Ribulose-phoshate binding barrel"/>
    <property type="match status" value="1"/>
</dbReference>
<sequence>MELIPAIDLMNGKCVRLFKGDFNKRKDFTKEPHEQAKYWESEGAKYIHIVDLDAAKTGSPTNDKSIKDIAKTVNIPIQIGGGIRSQERIEQLFSYGIEKVIMGTSAIENKELVKDLSNKFPGRIIVGIDAKDGKVSTRGWLEQSNILATDLVREFSSFKIASFIVTDINTDGTLEGTNEEFIKRILEITDIPVIASGGVGSISDLLSLVKLENSGLFGVIVGKALYENKFKISEAINVLSSERLTDFDLNNNYYA</sequence>
<name>HIS4_PROM9</name>
<reference key="1">
    <citation type="journal article" date="2006" name="Science">
        <title>Genomic islands and the ecology and evolution of Prochlorococcus.</title>
        <authorList>
            <person name="Coleman M.L."/>
            <person name="Sullivan M.B."/>
            <person name="Martiny A.C."/>
            <person name="Steglich C."/>
            <person name="Barry K."/>
            <person name="Delong E.F."/>
            <person name="Chisholm S.W."/>
        </authorList>
    </citation>
    <scope>NUCLEOTIDE SEQUENCE [LARGE SCALE GENOMIC DNA]</scope>
    <source>
        <strain>MIT 9312</strain>
    </source>
</reference>
<accession>Q31B81</accession>
<organism>
    <name type="scientific">Prochlorococcus marinus (strain MIT 9312)</name>
    <dbReference type="NCBI Taxonomy" id="74546"/>
    <lineage>
        <taxon>Bacteria</taxon>
        <taxon>Bacillati</taxon>
        <taxon>Cyanobacteriota</taxon>
        <taxon>Cyanophyceae</taxon>
        <taxon>Synechococcales</taxon>
        <taxon>Prochlorococcaceae</taxon>
        <taxon>Prochlorococcus</taxon>
    </lineage>
</organism>
<gene>
    <name evidence="1" type="primary">hisA</name>
    <name type="ordered locus">PMT9312_0804</name>
</gene>
<comment type="catalytic activity">
    <reaction evidence="1">
        <text>1-(5-phospho-beta-D-ribosyl)-5-[(5-phospho-beta-D-ribosylamino)methylideneamino]imidazole-4-carboxamide = 5-[(5-phospho-1-deoxy-D-ribulos-1-ylimino)methylamino]-1-(5-phospho-beta-D-ribosyl)imidazole-4-carboxamide</text>
        <dbReference type="Rhea" id="RHEA:15469"/>
        <dbReference type="ChEBI" id="CHEBI:58435"/>
        <dbReference type="ChEBI" id="CHEBI:58525"/>
        <dbReference type="EC" id="5.3.1.16"/>
    </reaction>
</comment>
<comment type="pathway">
    <text evidence="1">Amino-acid biosynthesis; L-histidine biosynthesis; L-histidine from 5-phospho-alpha-D-ribose 1-diphosphate: step 4/9.</text>
</comment>
<comment type="subcellular location">
    <subcellularLocation>
        <location evidence="1">Cytoplasm</location>
    </subcellularLocation>
</comment>
<comment type="similarity">
    <text evidence="1">Belongs to the HisA/HisF family.</text>
</comment>